<gene>
    <name evidence="1" type="primary">secA</name>
    <name type="ordered locus">SPP_1718</name>
</gene>
<name>SECA_STRZP</name>
<comment type="function">
    <text evidence="1">Part of the Sec protein translocase complex. Interacts with the SecYEG preprotein conducting channel. Has a central role in coupling the hydrolysis of ATP to the transfer of proteins into and across the cell membrane, serving as an ATP-driven molecular motor driving the stepwise translocation of polypeptide chains across the membrane.</text>
</comment>
<comment type="catalytic activity">
    <reaction evidence="1">
        <text>ATP + H2O + cellular proteinSide 1 = ADP + phosphate + cellular proteinSide 2.</text>
        <dbReference type="EC" id="7.4.2.8"/>
    </reaction>
</comment>
<comment type="cofactor">
    <cofactor evidence="1">
        <name>Zn(2+)</name>
        <dbReference type="ChEBI" id="CHEBI:29105"/>
    </cofactor>
    <text evidence="1">May bind 1 zinc ion per subunit.</text>
</comment>
<comment type="subunit">
    <text evidence="1">Monomer and homodimer. Part of the essential Sec protein translocation apparatus which comprises SecA, SecYEG and auxiliary proteins SecDF. Other proteins may also be involved.</text>
</comment>
<comment type="subcellular location">
    <subcellularLocation>
        <location evidence="1">Cell membrane</location>
        <topology evidence="1">Peripheral membrane protein</topology>
        <orientation evidence="1">Cytoplasmic side</orientation>
    </subcellularLocation>
    <subcellularLocation>
        <location evidence="1">Cytoplasm</location>
    </subcellularLocation>
    <text evidence="1">Distribution is 50-50.</text>
</comment>
<comment type="similarity">
    <text evidence="1">Belongs to the SecA family.</text>
</comment>
<reference key="1">
    <citation type="journal article" date="2010" name="Genome Biol.">
        <title>Structure and dynamics of the pan-genome of Streptococcus pneumoniae and closely related species.</title>
        <authorList>
            <person name="Donati C."/>
            <person name="Hiller N.L."/>
            <person name="Tettelin H."/>
            <person name="Muzzi A."/>
            <person name="Croucher N.J."/>
            <person name="Angiuoli S.V."/>
            <person name="Oggioni M."/>
            <person name="Dunning Hotopp J.C."/>
            <person name="Hu F.Z."/>
            <person name="Riley D.R."/>
            <person name="Covacci A."/>
            <person name="Mitchell T.J."/>
            <person name="Bentley S.D."/>
            <person name="Kilian M."/>
            <person name="Ehrlich G.D."/>
            <person name="Rappuoli R."/>
            <person name="Moxon E.R."/>
            <person name="Masignani V."/>
        </authorList>
    </citation>
    <scope>NUCLEOTIDE SEQUENCE [LARGE SCALE GENOMIC DNA]</scope>
    <source>
        <strain>P1031</strain>
    </source>
</reference>
<organism>
    <name type="scientific">Streptococcus pneumoniae (strain P1031)</name>
    <dbReference type="NCBI Taxonomy" id="488223"/>
    <lineage>
        <taxon>Bacteria</taxon>
        <taxon>Bacillati</taxon>
        <taxon>Bacillota</taxon>
        <taxon>Bacilli</taxon>
        <taxon>Lactobacillales</taxon>
        <taxon>Streptococcaceae</taxon>
        <taxon>Streptococcus</taxon>
    </lineage>
</organism>
<proteinExistence type="inferred from homology"/>
<protein>
    <recommendedName>
        <fullName evidence="1">Protein translocase subunit SecA</fullName>
        <ecNumber evidence="1">7.4.2.8</ecNumber>
    </recommendedName>
</protein>
<dbReference type="EC" id="7.4.2.8" evidence="1"/>
<dbReference type="EMBL" id="CP000920">
    <property type="protein sequence ID" value="ACO21281.1"/>
    <property type="molecule type" value="Genomic_DNA"/>
</dbReference>
<dbReference type="RefSeq" id="WP_001274095.1">
    <property type="nucleotide sequence ID" value="NC_012467.1"/>
</dbReference>
<dbReference type="SMR" id="C1CM38"/>
<dbReference type="KEGG" id="spp:SPP_1718"/>
<dbReference type="HOGENOM" id="CLU_005314_3_0_9"/>
<dbReference type="GO" id="GO:0031522">
    <property type="term" value="C:cell envelope Sec protein transport complex"/>
    <property type="evidence" value="ECO:0007669"/>
    <property type="project" value="TreeGrafter"/>
</dbReference>
<dbReference type="GO" id="GO:0005829">
    <property type="term" value="C:cytosol"/>
    <property type="evidence" value="ECO:0007669"/>
    <property type="project" value="TreeGrafter"/>
</dbReference>
<dbReference type="GO" id="GO:0005886">
    <property type="term" value="C:plasma membrane"/>
    <property type="evidence" value="ECO:0007669"/>
    <property type="project" value="UniProtKB-SubCell"/>
</dbReference>
<dbReference type="GO" id="GO:0005524">
    <property type="term" value="F:ATP binding"/>
    <property type="evidence" value="ECO:0007669"/>
    <property type="project" value="UniProtKB-UniRule"/>
</dbReference>
<dbReference type="GO" id="GO:0046872">
    <property type="term" value="F:metal ion binding"/>
    <property type="evidence" value="ECO:0007669"/>
    <property type="project" value="UniProtKB-KW"/>
</dbReference>
<dbReference type="GO" id="GO:0008564">
    <property type="term" value="F:protein-exporting ATPase activity"/>
    <property type="evidence" value="ECO:0007669"/>
    <property type="project" value="UniProtKB-EC"/>
</dbReference>
<dbReference type="GO" id="GO:0065002">
    <property type="term" value="P:intracellular protein transmembrane transport"/>
    <property type="evidence" value="ECO:0007669"/>
    <property type="project" value="UniProtKB-UniRule"/>
</dbReference>
<dbReference type="GO" id="GO:0017038">
    <property type="term" value="P:protein import"/>
    <property type="evidence" value="ECO:0007669"/>
    <property type="project" value="InterPro"/>
</dbReference>
<dbReference type="GO" id="GO:0006605">
    <property type="term" value="P:protein targeting"/>
    <property type="evidence" value="ECO:0007669"/>
    <property type="project" value="UniProtKB-UniRule"/>
</dbReference>
<dbReference type="GO" id="GO:0043952">
    <property type="term" value="P:protein transport by the Sec complex"/>
    <property type="evidence" value="ECO:0007669"/>
    <property type="project" value="TreeGrafter"/>
</dbReference>
<dbReference type="CDD" id="cd17928">
    <property type="entry name" value="DEXDc_SecA"/>
    <property type="match status" value="1"/>
</dbReference>
<dbReference type="CDD" id="cd18803">
    <property type="entry name" value="SF2_C_secA"/>
    <property type="match status" value="1"/>
</dbReference>
<dbReference type="FunFam" id="1.10.3060.10:FF:000002">
    <property type="entry name" value="Preprotein translocase subunit SecA"/>
    <property type="match status" value="1"/>
</dbReference>
<dbReference type="FunFam" id="3.40.50.300:FF:000429">
    <property type="entry name" value="Preprotein translocase subunit SecA"/>
    <property type="match status" value="1"/>
</dbReference>
<dbReference type="FunFam" id="3.90.1440.10:FF:000001">
    <property type="entry name" value="Preprotein translocase subunit SecA"/>
    <property type="match status" value="1"/>
</dbReference>
<dbReference type="Gene3D" id="1.10.3060.10">
    <property type="entry name" value="Helical scaffold and wing domains of SecA"/>
    <property type="match status" value="1"/>
</dbReference>
<dbReference type="Gene3D" id="3.40.50.300">
    <property type="entry name" value="P-loop containing nucleotide triphosphate hydrolases"/>
    <property type="match status" value="3"/>
</dbReference>
<dbReference type="Gene3D" id="3.90.1440.10">
    <property type="entry name" value="SecA, preprotein cross-linking domain"/>
    <property type="match status" value="1"/>
</dbReference>
<dbReference type="HAMAP" id="MF_01382">
    <property type="entry name" value="SecA"/>
    <property type="match status" value="1"/>
</dbReference>
<dbReference type="InterPro" id="IPR014001">
    <property type="entry name" value="Helicase_ATP-bd"/>
</dbReference>
<dbReference type="InterPro" id="IPR001650">
    <property type="entry name" value="Helicase_C-like"/>
</dbReference>
<dbReference type="InterPro" id="IPR027417">
    <property type="entry name" value="P-loop_NTPase"/>
</dbReference>
<dbReference type="InterPro" id="IPR004027">
    <property type="entry name" value="SEC_C_motif"/>
</dbReference>
<dbReference type="InterPro" id="IPR000185">
    <property type="entry name" value="SecA"/>
</dbReference>
<dbReference type="InterPro" id="IPR020937">
    <property type="entry name" value="SecA_CS"/>
</dbReference>
<dbReference type="InterPro" id="IPR011115">
    <property type="entry name" value="SecA_DEAD"/>
</dbReference>
<dbReference type="InterPro" id="IPR014018">
    <property type="entry name" value="SecA_motor_DEAD"/>
</dbReference>
<dbReference type="InterPro" id="IPR011130">
    <property type="entry name" value="SecA_preprotein_X-link_dom"/>
</dbReference>
<dbReference type="InterPro" id="IPR044722">
    <property type="entry name" value="SecA_SF2_C"/>
</dbReference>
<dbReference type="InterPro" id="IPR011116">
    <property type="entry name" value="SecA_Wing/Scaffold"/>
</dbReference>
<dbReference type="InterPro" id="IPR036266">
    <property type="entry name" value="SecA_Wing/Scaffold_sf"/>
</dbReference>
<dbReference type="InterPro" id="IPR036670">
    <property type="entry name" value="SecA_X-link_sf"/>
</dbReference>
<dbReference type="NCBIfam" id="NF006630">
    <property type="entry name" value="PRK09200.1"/>
    <property type="match status" value="1"/>
</dbReference>
<dbReference type="NCBIfam" id="TIGR00963">
    <property type="entry name" value="secA"/>
    <property type="match status" value="1"/>
</dbReference>
<dbReference type="PANTHER" id="PTHR30612:SF0">
    <property type="entry name" value="CHLOROPLAST PROTEIN-TRANSPORTING ATPASE"/>
    <property type="match status" value="1"/>
</dbReference>
<dbReference type="PANTHER" id="PTHR30612">
    <property type="entry name" value="SECA INNER MEMBRANE COMPONENT OF SEC PROTEIN SECRETION SYSTEM"/>
    <property type="match status" value="1"/>
</dbReference>
<dbReference type="Pfam" id="PF21090">
    <property type="entry name" value="P-loop_SecA"/>
    <property type="match status" value="2"/>
</dbReference>
<dbReference type="Pfam" id="PF02810">
    <property type="entry name" value="SEC-C"/>
    <property type="match status" value="1"/>
</dbReference>
<dbReference type="Pfam" id="PF07517">
    <property type="entry name" value="SecA_DEAD"/>
    <property type="match status" value="1"/>
</dbReference>
<dbReference type="Pfam" id="PF01043">
    <property type="entry name" value="SecA_PP_bind"/>
    <property type="match status" value="1"/>
</dbReference>
<dbReference type="Pfam" id="PF07516">
    <property type="entry name" value="SecA_SW"/>
    <property type="match status" value="1"/>
</dbReference>
<dbReference type="PRINTS" id="PR00906">
    <property type="entry name" value="SECA"/>
</dbReference>
<dbReference type="SMART" id="SM00957">
    <property type="entry name" value="SecA_DEAD"/>
    <property type="match status" value="1"/>
</dbReference>
<dbReference type="SMART" id="SM00958">
    <property type="entry name" value="SecA_PP_bind"/>
    <property type="match status" value="1"/>
</dbReference>
<dbReference type="SUPFAM" id="SSF81886">
    <property type="entry name" value="Helical scaffold and wing domains of SecA"/>
    <property type="match status" value="1"/>
</dbReference>
<dbReference type="SUPFAM" id="SSF52540">
    <property type="entry name" value="P-loop containing nucleoside triphosphate hydrolases"/>
    <property type="match status" value="2"/>
</dbReference>
<dbReference type="SUPFAM" id="SSF81767">
    <property type="entry name" value="Pre-protein crosslinking domain of SecA"/>
    <property type="match status" value="1"/>
</dbReference>
<dbReference type="PROSITE" id="PS01312">
    <property type="entry name" value="SECA"/>
    <property type="match status" value="1"/>
</dbReference>
<dbReference type="PROSITE" id="PS51196">
    <property type="entry name" value="SECA_MOTOR_DEAD"/>
    <property type="match status" value="1"/>
</dbReference>
<keyword id="KW-0067">ATP-binding</keyword>
<keyword id="KW-1003">Cell membrane</keyword>
<keyword id="KW-0963">Cytoplasm</keyword>
<keyword id="KW-0472">Membrane</keyword>
<keyword id="KW-0479">Metal-binding</keyword>
<keyword id="KW-0547">Nucleotide-binding</keyword>
<keyword id="KW-0653">Protein transport</keyword>
<keyword id="KW-1278">Translocase</keyword>
<keyword id="KW-0811">Translocation</keyword>
<keyword id="KW-0813">Transport</keyword>
<keyword id="KW-0862">Zinc</keyword>
<sequence>MANILKTIIENDKGEIRRLEKMADKVFKYEDQMAALTDDQLKAKTVEFKERYQNGESLDSLLYEAFAVVREGAKRVLGLFPYKVQVMGGIVLHHGDVPEMRTGEGKTLTATMPVYLNALSGKGVHVVTVNEYLSERDATEMGELYSWLGLSVGINLATKSPMEKKEAYECDITYSTNSEIGFDYLRDNMVVRAENMVQRPLNYALVDEVDSILIDEARTPLIVSGANAVETSQLYHMADHYVKSLNKDDYIIDVQSKTIGLSDSGIDRAESYFKLENLYDIENVALTHFIDNALRANYIMLLDIDYVVSEEQEILIVDQFTGRTMEGRRYSDGLHQAIEAKEGVPIQDETKTSASITYQNLFRMYKKLSGMTGTGKTEEEEFREIYNIRVIPIPTNRPVQRIDHSDLLYASIESKFKAVVEDVKARYQKGQPVLVGTVAVETSDYISKKLVAAGVPHEVLNAKNHYREAQIIMNAGQRGAVTIATNMAGRGTDIKLGEGVRELGGLCVIGTERHESRRIDNQLRGRSGRQGDPGESQFYLSLEDDLMKRFGSERLKGIFERLNMSEEAIESRMLTRQVEAAQKRVEGNNYDTRKQVLQYDDVMREQREIIYTQRYDVITADRDLAPEIQSMIKRTLERVVDGHARAKQDEKLEAILNFAKYNLLPEDSITMEDLSGLSDKAIKEELFQRALKVYDSQVSKLRDEEAVKEFQKVLILRVVDNKWTDHIDALDQLRNAVGLRGYAQNNPVVEYQAEGFRMFNDMIGSIEFDVTRLMMKAQIHEQERPQAERHISTTATRNIAAHQASMPEDLDLSQIGRNELCPCGSGKKFKNCHGKRQ</sequence>
<feature type="chain" id="PRO_1000184248" description="Protein translocase subunit SecA">
    <location>
        <begin position="1"/>
        <end position="837"/>
    </location>
</feature>
<feature type="binding site" evidence="1">
    <location>
        <position position="85"/>
    </location>
    <ligand>
        <name>ATP</name>
        <dbReference type="ChEBI" id="CHEBI:30616"/>
    </ligand>
</feature>
<feature type="binding site" evidence="1">
    <location>
        <begin position="103"/>
        <end position="107"/>
    </location>
    <ligand>
        <name>ATP</name>
        <dbReference type="ChEBI" id="CHEBI:30616"/>
    </ligand>
</feature>
<feature type="binding site" evidence="1">
    <location>
        <position position="493"/>
    </location>
    <ligand>
        <name>ATP</name>
        <dbReference type="ChEBI" id="CHEBI:30616"/>
    </ligand>
</feature>
<feature type="binding site" evidence="1">
    <location>
        <position position="821"/>
    </location>
    <ligand>
        <name>Zn(2+)</name>
        <dbReference type="ChEBI" id="CHEBI:29105"/>
    </ligand>
</feature>
<feature type="binding site" evidence="1">
    <location>
        <position position="823"/>
    </location>
    <ligand>
        <name>Zn(2+)</name>
        <dbReference type="ChEBI" id="CHEBI:29105"/>
    </ligand>
</feature>
<feature type="binding site" evidence="1">
    <location>
        <position position="832"/>
    </location>
    <ligand>
        <name>Zn(2+)</name>
        <dbReference type="ChEBI" id="CHEBI:29105"/>
    </ligand>
</feature>
<feature type="binding site" evidence="1">
    <location>
        <position position="833"/>
    </location>
    <ligand>
        <name>Zn(2+)</name>
        <dbReference type="ChEBI" id="CHEBI:29105"/>
    </ligand>
</feature>
<accession>C1CM38</accession>
<evidence type="ECO:0000255" key="1">
    <source>
        <dbReference type="HAMAP-Rule" id="MF_01382"/>
    </source>
</evidence>